<accession>A1V8B5</accession>
<keyword id="KW-0678">Repressor</keyword>
<keyword id="KW-0687">Ribonucleoprotein</keyword>
<keyword id="KW-0689">Ribosomal protein</keyword>
<keyword id="KW-0694">RNA-binding</keyword>
<keyword id="KW-0699">rRNA-binding</keyword>
<keyword id="KW-0810">Translation regulation</keyword>
<keyword id="KW-0820">tRNA-binding</keyword>
<protein>
    <recommendedName>
        <fullName evidence="1">Large ribosomal subunit protein uL1</fullName>
    </recommendedName>
    <alternativeName>
        <fullName evidence="2">50S ribosomal protein L1</fullName>
    </alternativeName>
</protein>
<reference key="1">
    <citation type="journal article" date="2010" name="Genome Biol. Evol.">
        <title>Continuing evolution of Burkholderia mallei through genome reduction and large-scale rearrangements.</title>
        <authorList>
            <person name="Losada L."/>
            <person name="Ronning C.M."/>
            <person name="DeShazer D."/>
            <person name="Woods D."/>
            <person name="Fedorova N."/>
            <person name="Kim H.S."/>
            <person name="Shabalina S.A."/>
            <person name="Pearson T.R."/>
            <person name="Brinkac L."/>
            <person name="Tan P."/>
            <person name="Nandi T."/>
            <person name="Crabtree J."/>
            <person name="Badger J."/>
            <person name="Beckstrom-Sternberg S."/>
            <person name="Saqib M."/>
            <person name="Schutzer S.E."/>
            <person name="Keim P."/>
            <person name="Nierman W.C."/>
        </authorList>
    </citation>
    <scope>NUCLEOTIDE SEQUENCE [LARGE SCALE GENOMIC DNA]</scope>
    <source>
        <strain>SAVP1</strain>
    </source>
</reference>
<proteinExistence type="inferred from homology"/>
<gene>
    <name evidence="1" type="primary">rplA</name>
    <name type="ordered locus">BMASAVP1_A3181</name>
</gene>
<comment type="function">
    <text evidence="1">Binds directly to 23S rRNA. The L1 stalk is quite mobile in the ribosome, and is involved in E site tRNA release.</text>
</comment>
<comment type="function">
    <text evidence="1">Protein L1 is also a translational repressor protein, it controls the translation of the L11 operon by binding to its mRNA.</text>
</comment>
<comment type="subunit">
    <text evidence="1">Part of the 50S ribosomal subunit.</text>
</comment>
<comment type="similarity">
    <text evidence="1">Belongs to the universal ribosomal protein uL1 family.</text>
</comment>
<feature type="chain" id="PRO_0000307976" description="Large ribosomal subunit protein uL1">
    <location>
        <begin position="1"/>
        <end position="232"/>
    </location>
</feature>
<dbReference type="EMBL" id="CP000526">
    <property type="protein sequence ID" value="ABM52584.1"/>
    <property type="molecule type" value="Genomic_DNA"/>
</dbReference>
<dbReference type="RefSeq" id="WP_004185135.1">
    <property type="nucleotide sequence ID" value="NC_008785.1"/>
</dbReference>
<dbReference type="SMR" id="A1V8B5"/>
<dbReference type="GeneID" id="93061844"/>
<dbReference type="KEGG" id="bmv:BMASAVP1_A3181"/>
<dbReference type="HOGENOM" id="CLU_062853_0_0_4"/>
<dbReference type="GO" id="GO:0022625">
    <property type="term" value="C:cytosolic large ribosomal subunit"/>
    <property type="evidence" value="ECO:0007669"/>
    <property type="project" value="TreeGrafter"/>
</dbReference>
<dbReference type="GO" id="GO:0019843">
    <property type="term" value="F:rRNA binding"/>
    <property type="evidence" value="ECO:0007669"/>
    <property type="project" value="UniProtKB-UniRule"/>
</dbReference>
<dbReference type="GO" id="GO:0003735">
    <property type="term" value="F:structural constituent of ribosome"/>
    <property type="evidence" value="ECO:0007669"/>
    <property type="project" value="InterPro"/>
</dbReference>
<dbReference type="GO" id="GO:0000049">
    <property type="term" value="F:tRNA binding"/>
    <property type="evidence" value="ECO:0007669"/>
    <property type="project" value="UniProtKB-KW"/>
</dbReference>
<dbReference type="GO" id="GO:0006417">
    <property type="term" value="P:regulation of translation"/>
    <property type="evidence" value="ECO:0007669"/>
    <property type="project" value="UniProtKB-KW"/>
</dbReference>
<dbReference type="GO" id="GO:0006412">
    <property type="term" value="P:translation"/>
    <property type="evidence" value="ECO:0007669"/>
    <property type="project" value="UniProtKB-UniRule"/>
</dbReference>
<dbReference type="CDD" id="cd00403">
    <property type="entry name" value="Ribosomal_L1"/>
    <property type="match status" value="1"/>
</dbReference>
<dbReference type="FunFam" id="3.40.50.790:FF:000001">
    <property type="entry name" value="50S ribosomal protein L1"/>
    <property type="match status" value="1"/>
</dbReference>
<dbReference type="Gene3D" id="3.30.190.20">
    <property type="match status" value="1"/>
</dbReference>
<dbReference type="Gene3D" id="3.40.50.790">
    <property type="match status" value="1"/>
</dbReference>
<dbReference type="HAMAP" id="MF_01318_B">
    <property type="entry name" value="Ribosomal_uL1_B"/>
    <property type="match status" value="1"/>
</dbReference>
<dbReference type="InterPro" id="IPR005878">
    <property type="entry name" value="Ribosom_uL1_bac-type"/>
</dbReference>
<dbReference type="InterPro" id="IPR002143">
    <property type="entry name" value="Ribosomal_uL1"/>
</dbReference>
<dbReference type="InterPro" id="IPR023674">
    <property type="entry name" value="Ribosomal_uL1-like"/>
</dbReference>
<dbReference type="InterPro" id="IPR028364">
    <property type="entry name" value="Ribosomal_uL1/biogenesis"/>
</dbReference>
<dbReference type="InterPro" id="IPR016095">
    <property type="entry name" value="Ribosomal_uL1_3-a/b-sand"/>
</dbReference>
<dbReference type="InterPro" id="IPR023673">
    <property type="entry name" value="Ribosomal_uL1_CS"/>
</dbReference>
<dbReference type="NCBIfam" id="TIGR01169">
    <property type="entry name" value="rplA_bact"/>
    <property type="match status" value="1"/>
</dbReference>
<dbReference type="PANTHER" id="PTHR36427">
    <property type="entry name" value="54S RIBOSOMAL PROTEIN L1, MITOCHONDRIAL"/>
    <property type="match status" value="1"/>
</dbReference>
<dbReference type="PANTHER" id="PTHR36427:SF3">
    <property type="entry name" value="LARGE RIBOSOMAL SUBUNIT PROTEIN UL1M"/>
    <property type="match status" value="1"/>
</dbReference>
<dbReference type="Pfam" id="PF00687">
    <property type="entry name" value="Ribosomal_L1"/>
    <property type="match status" value="1"/>
</dbReference>
<dbReference type="PIRSF" id="PIRSF002155">
    <property type="entry name" value="Ribosomal_L1"/>
    <property type="match status" value="1"/>
</dbReference>
<dbReference type="SUPFAM" id="SSF56808">
    <property type="entry name" value="Ribosomal protein L1"/>
    <property type="match status" value="1"/>
</dbReference>
<dbReference type="PROSITE" id="PS01199">
    <property type="entry name" value="RIBOSOMAL_L1"/>
    <property type="match status" value="1"/>
</dbReference>
<sequence>MAKISKRRQAFAAKVDRQKLYPIDDALALVKECASAKFDESIDVAVQLGIDAKKSDQVVRGSVVLPAGTGKSVRVAVFAQGEKAEQARAAGAEVVGMEDLAEQIKAGQMDFDIVIASPDTMRIVGTLGQILGPRGLMPNPKVGTVTPDVATAVKNAKAGQVQFRVDKAGIIHATIGRASFEPTALRTNLSALIEALQKAKPATSKGVYLRKIALSSTMGVGVRVDQGSLAAQ</sequence>
<evidence type="ECO:0000255" key="1">
    <source>
        <dbReference type="HAMAP-Rule" id="MF_01318"/>
    </source>
</evidence>
<evidence type="ECO:0000305" key="2"/>
<organism>
    <name type="scientific">Burkholderia mallei (strain SAVP1)</name>
    <dbReference type="NCBI Taxonomy" id="320388"/>
    <lineage>
        <taxon>Bacteria</taxon>
        <taxon>Pseudomonadati</taxon>
        <taxon>Pseudomonadota</taxon>
        <taxon>Betaproteobacteria</taxon>
        <taxon>Burkholderiales</taxon>
        <taxon>Burkholderiaceae</taxon>
        <taxon>Burkholderia</taxon>
        <taxon>pseudomallei group</taxon>
    </lineage>
</organism>
<name>RL1_BURMS</name>